<reference key="1">
    <citation type="journal article" date="2005" name="Science">
        <title>The genome of the basidiomycetous yeast and human pathogen Cryptococcus neoformans.</title>
        <authorList>
            <person name="Loftus B.J."/>
            <person name="Fung E."/>
            <person name="Roncaglia P."/>
            <person name="Rowley D."/>
            <person name="Amedeo P."/>
            <person name="Bruno D."/>
            <person name="Vamathevan J."/>
            <person name="Miranda M."/>
            <person name="Anderson I.J."/>
            <person name="Fraser J.A."/>
            <person name="Allen J.E."/>
            <person name="Bosdet I.E."/>
            <person name="Brent M.R."/>
            <person name="Chiu R."/>
            <person name="Doering T.L."/>
            <person name="Donlin M.J."/>
            <person name="D'Souza C.A."/>
            <person name="Fox D.S."/>
            <person name="Grinberg V."/>
            <person name="Fu J."/>
            <person name="Fukushima M."/>
            <person name="Haas B.J."/>
            <person name="Huang J.C."/>
            <person name="Janbon G."/>
            <person name="Jones S.J.M."/>
            <person name="Koo H.L."/>
            <person name="Krzywinski M.I."/>
            <person name="Kwon-Chung K.J."/>
            <person name="Lengeler K.B."/>
            <person name="Maiti R."/>
            <person name="Marra M.A."/>
            <person name="Marra R.E."/>
            <person name="Mathewson C.A."/>
            <person name="Mitchell T.G."/>
            <person name="Pertea M."/>
            <person name="Riggs F.R."/>
            <person name="Salzberg S.L."/>
            <person name="Schein J.E."/>
            <person name="Shvartsbeyn A."/>
            <person name="Shin H."/>
            <person name="Shumway M."/>
            <person name="Specht C.A."/>
            <person name="Suh B.B."/>
            <person name="Tenney A."/>
            <person name="Utterback T.R."/>
            <person name="Wickes B.L."/>
            <person name="Wortman J.R."/>
            <person name="Wye N.H."/>
            <person name="Kronstad J.W."/>
            <person name="Lodge J.K."/>
            <person name="Heitman J."/>
            <person name="Davis R.W."/>
            <person name="Fraser C.M."/>
            <person name="Hyman R.W."/>
        </authorList>
    </citation>
    <scope>NUCLEOTIDE SEQUENCE [LARGE SCALE GENOMIC DNA]</scope>
    <source>
        <strain>JEC21 / ATCC MYA-565</strain>
    </source>
</reference>
<organism>
    <name type="scientific">Cryptococcus neoformans var. neoformans serotype D (strain JEC21 / ATCC MYA-565)</name>
    <name type="common">Filobasidiella neoformans</name>
    <dbReference type="NCBI Taxonomy" id="214684"/>
    <lineage>
        <taxon>Eukaryota</taxon>
        <taxon>Fungi</taxon>
        <taxon>Dikarya</taxon>
        <taxon>Basidiomycota</taxon>
        <taxon>Agaricomycotina</taxon>
        <taxon>Tremellomycetes</taxon>
        <taxon>Tremellales</taxon>
        <taxon>Cryptococcaceae</taxon>
        <taxon>Cryptococcus</taxon>
        <taxon>Cryptococcus neoformans species complex</taxon>
    </lineage>
</organism>
<dbReference type="EMBL" id="AE017346">
    <property type="protein sequence ID" value="AAW44126.1"/>
    <property type="molecule type" value="Genomic_DNA"/>
</dbReference>
<dbReference type="RefSeq" id="XP_571433.1">
    <property type="nucleotide sequence ID" value="XM_571433.1"/>
</dbReference>
<dbReference type="SMR" id="P0CR58"/>
<dbReference type="STRING" id="214684.P0CR58"/>
<dbReference type="PaxDb" id="214684-P0CR58"/>
<dbReference type="EnsemblFungi" id="AAW44126">
    <property type="protein sequence ID" value="AAW44126"/>
    <property type="gene ID" value="CNF03550"/>
</dbReference>
<dbReference type="GeneID" id="3258364"/>
<dbReference type="KEGG" id="cne:CNF03550"/>
<dbReference type="VEuPathDB" id="FungiDB:CNF03550"/>
<dbReference type="eggNOG" id="KOG2273">
    <property type="taxonomic scope" value="Eukaryota"/>
</dbReference>
<dbReference type="HOGENOM" id="CLU_009058_1_1_1"/>
<dbReference type="InParanoid" id="P0CR58"/>
<dbReference type="OMA" id="SSPWDMP"/>
<dbReference type="OrthoDB" id="10064318at2759"/>
<dbReference type="Proteomes" id="UP000002149">
    <property type="component" value="Chromosome 6"/>
</dbReference>
<dbReference type="GO" id="GO:0005829">
    <property type="term" value="C:cytosol"/>
    <property type="evidence" value="ECO:0007669"/>
    <property type="project" value="GOC"/>
</dbReference>
<dbReference type="GO" id="GO:0031901">
    <property type="term" value="C:early endosome membrane"/>
    <property type="evidence" value="ECO:0000318"/>
    <property type="project" value="GO_Central"/>
</dbReference>
<dbReference type="GO" id="GO:0035091">
    <property type="term" value="F:phosphatidylinositol binding"/>
    <property type="evidence" value="ECO:0007669"/>
    <property type="project" value="InterPro"/>
</dbReference>
<dbReference type="GO" id="GO:0034498">
    <property type="term" value="P:early endosome to Golgi transport"/>
    <property type="evidence" value="ECO:0000318"/>
    <property type="project" value="GO_Central"/>
</dbReference>
<dbReference type="GO" id="GO:0006886">
    <property type="term" value="P:intracellular protein transport"/>
    <property type="evidence" value="ECO:0000318"/>
    <property type="project" value="GO_Central"/>
</dbReference>
<dbReference type="CDD" id="cd07597">
    <property type="entry name" value="BAR_SNX8"/>
    <property type="match status" value="1"/>
</dbReference>
<dbReference type="CDD" id="cd06866">
    <property type="entry name" value="PX_SNX8_Mvp1p_like"/>
    <property type="match status" value="1"/>
</dbReference>
<dbReference type="Gene3D" id="1.10.238.10">
    <property type="entry name" value="EF-hand"/>
    <property type="match status" value="1"/>
</dbReference>
<dbReference type="Gene3D" id="3.30.1520.10">
    <property type="entry name" value="Phox-like domain"/>
    <property type="match status" value="1"/>
</dbReference>
<dbReference type="InterPro" id="IPR011992">
    <property type="entry name" value="EF-hand-dom_pair"/>
</dbReference>
<dbReference type="InterPro" id="IPR001683">
    <property type="entry name" value="PX_dom"/>
</dbReference>
<dbReference type="InterPro" id="IPR036871">
    <property type="entry name" value="PX_dom_sf"/>
</dbReference>
<dbReference type="InterPro" id="IPR028662">
    <property type="entry name" value="SNX8/Mvp1"/>
</dbReference>
<dbReference type="InterPro" id="IPR035704">
    <property type="entry name" value="SNX8/Mvp1_PX"/>
</dbReference>
<dbReference type="InterPro" id="IPR045734">
    <property type="entry name" value="Snx8_BAR_dom"/>
</dbReference>
<dbReference type="PANTHER" id="PTHR46571">
    <property type="entry name" value="SORTING NEXIN-8"/>
    <property type="match status" value="1"/>
</dbReference>
<dbReference type="PANTHER" id="PTHR46571:SF1">
    <property type="entry name" value="SORTING NEXIN-8"/>
    <property type="match status" value="1"/>
</dbReference>
<dbReference type="Pfam" id="PF00787">
    <property type="entry name" value="PX"/>
    <property type="match status" value="1"/>
</dbReference>
<dbReference type="Pfam" id="PF19566">
    <property type="entry name" value="Snx8_BAR_dom"/>
    <property type="match status" value="1"/>
</dbReference>
<dbReference type="SMART" id="SM00312">
    <property type="entry name" value="PX"/>
    <property type="match status" value="1"/>
</dbReference>
<dbReference type="SUPFAM" id="SSF47473">
    <property type="entry name" value="EF-hand"/>
    <property type="match status" value="1"/>
</dbReference>
<dbReference type="SUPFAM" id="SSF64268">
    <property type="entry name" value="PX domain"/>
    <property type="match status" value="1"/>
</dbReference>
<dbReference type="PROSITE" id="PS50195">
    <property type="entry name" value="PX"/>
    <property type="match status" value="1"/>
</dbReference>
<keyword id="KW-0963">Cytoplasm</keyword>
<keyword id="KW-0472">Membrane</keyword>
<keyword id="KW-0653">Protein transport</keyword>
<keyword id="KW-1185">Reference proteome</keyword>
<keyword id="KW-0813">Transport</keyword>
<feature type="chain" id="PRO_0000238598" description="Sorting nexin MVP1">
    <location>
        <begin position="1"/>
        <end position="612"/>
    </location>
</feature>
<feature type="domain" description="PX" evidence="2">
    <location>
        <begin position="226"/>
        <end position="334"/>
    </location>
</feature>
<feature type="region of interest" description="Disordered" evidence="3">
    <location>
        <begin position="35"/>
        <end position="68"/>
    </location>
</feature>
<feature type="binding site" evidence="1">
    <location>
        <position position="263"/>
    </location>
    <ligand>
        <name>a 1,2-diacyl-sn-glycero-3-phospho-(1D-myo-inositol-3-phosphate)</name>
        <dbReference type="ChEBI" id="CHEBI:58088"/>
    </ligand>
</feature>
<feature type="binding site" evidence="1">
    <location>
        <position position="265"/>
    </location>
    <ligand>
        <name>a 1,2-diacyl-sn-glycero-3-phospho-(1D-myo-inositol-3-phosphate)</name>
        <dbReference type="ChEBI" id="CHEBI:58088"/>
    </ligand>
</feature>
<feature type="binding site" evidence="1">
    <location>
        <position position="289"/>
    </location>
    <ligand>
        <name>a 1,2-diacyl-sn-glycero-3-phospho-(1D-myo-inositol-3-phosphate)</name>
        <dbReference type="ChEBI" id="CHEBI:58088"/>
    </ligand>
</feature>
<feature type="binding site" evidence="1">
    <location>
        <position position="301"/>
    </location>
    <ligand>
        <name>a 1,2-diacyl-sn-glycero-3-phospho-(1D-myo-inositol-3-phosphate)</name>
        <dbReference type="ChEBI" id="CHEBI:58088"/>
    </ligand>
</feature>
<sequence>MFNAPRPMASSYSYTDPLSNSAAAGAAFGELDPWSSAPSPAGSVTPARATASASEGRNIAANGNKEEGLNGLINDPPALYVSLLDQLDTSGTGEVSLAAVHRLLGTSKLPAVVVEKIIHLTSRDKSTLTRPEFFCALALVSLAQSSPDPNDISIEKLSFSLSNLPLPKLKPSDPPSVSSGVAASTAAATGFNAWDGTINKGTTYSANNSTFRSTDPMVDNAEDRWWKDQERIVVTLIPEKEGWFLQKYRIESDKRGEGPVARRYSDFVWLMDVLEKRYPFRILPPLPPKRINPSSAFLEARRLALIRLLSFLTAHPVLRTDACLNIFLTSSSFESWRKRTPVSTDEESLSKKLTTAQEMSIPSDLELKLDNLRERLPAMLGHYTRLVVMAERSLVRLQVQAAEAARMAMSTQSIGELVPRCCWRSVQGDDGESGRGVARECGLCEGVGRGWGDVGDGWVSVGEELEKGVQLLQKHIESLKSQRDLYSSFHALFYRHNKLSLDNVDVLRKRVDSRFSKIESLKSAKKPGWEGEVDKLASQSDRDTAEIQRLLARRVFVRACMWHELSVVFHSMQAAQGTMGWKDFVKDQKERTKRLNGVWQGLEETLESMPLE</sequence>
<gene>
    <name type="primary">MVP1</name>
    <name type="ordered locus">CNF03550</name>
</gene>
<proteinExistence type="inferred from homology"/>
<protein>
    <recommendedName>
        <fullName>Sorting nexin MVP1</fullName>
    </recommendedName>
</protein>
<name>MVP1_CRYNJ</name>
<accession>P0CR58</accession>
<accession>Q55R65</accession>
<accession>Q5KF05</accession>
<comment type="function">
    <text evidence="1">Required for vacuolar protein sorting.</text>
</comment>
<comment type="subcellular location">
    <subcellularLocation>
        <location evidence="1">Cytoplasm</location>
    </subcellularLocation>
    <subcellularLocation>
        <location evidence="1">Membrane</location>
        <topology evidence="1">Peripheral membrane protein</topology>
        <orientation evidence="1">Cytoplasmic side</orientation>
    </subcellularLocation>
</comment>
<comment type="domain">
    <text evidence="1">The PX domain binds phosphatidylinositol 3-phosphate which is necessary for peripheral membrane localization.</text>
</comment>
<comment type="similarity">
    <text evidence="4">Belongs to the sorting nexin family.</text>
</comment>
<evidence type="ECO:0000250" key="1"/>
<evidence type="ECO:0000255" key="2">
    <source>
        <dbReference type="PROSITE-ProRule" id="PRU00147"/>
    </source>
</evidence>
<evidence type="ECO:0000256" key="3">
    <source>
        <dbReference type="SAM" id="MobiDB-lite"/>
    </source>
</evidence>
<evidence type="ECO:0000305" key="4"/>